<name>MTXH_METMA</name>
<reference key="1">
    <citation type="journal article" date="2002" name="J. Mol. Microbiol. Biotechnol.">
        <title>The genome of Methanosarcina mazei: evidence for lateral gene transfer between Bacteria and Archaea.</title>
        <authorList>
            <person name="Deppenmeier U."/>
            <person name="Johann A."/>
            <person name="Hartsch T."/>
            <person name="Merkl R."/>
            <person name="Schmitz R.A."/>
            <person name="Martinez-Arias R."/>
            <person name="Henne A."/>
            <person name="Wiezer A."/>
            <person name="Baeumer S."/>
            <person name="Jacobi C."/>
            <person name="Brueggemann H."/>
            <person name="Lienard T."/>
            <person name="Christmann A."/>
            <person name="Boemecke M."/>
            <person name="Steckel S."/>
            <person name="Bhattacharyya A."/>
            <person name="Lykidis A."/>
            <person name="Overbeek R."/>
            <person name="Klenk H.-P."/>
            <person name="Gunsalus R.P."/>
            <person name="Fritz H.-J."/>
            <person name="Gottschalk G."/>
        </authorList>
    </citation>
    <scope>NUCLEOTIDE SEQUENCE [LARGE SCALE GENOMIC DNA]</scope>
    <source>
        <strain>ATCC BAA-159 / DSM 3647 / Goe1 / Go1 / JCM 11833 / OCM 88</strain>
    </source>
</reference>
<keyword id="KW-0489">Methyltransferase</keyword>
<keyword id="KW-0808">Transferase</keyword>
<dbReference type="EC" id="2.1.1.-"/>
<dbReference type="EMBL" id="AE008384">
    <property type="protein sequence ID" value="AAM29952.1"/>
    <property type="molecule type" value="Genomic_DNA"/>
</dbReference>
<dbReference type="SMR" id="Q8Q081"/>
<dbReference type="KEGG" id="mma:MM_0256"/>
<dbReference type="PATRIC" id="fig|192952.21.peg.311"/>
<dbReference type="eggNOG" id="arCOG04336">
    <property type="taxonomic scope" value="Archaea"/>
</dbReference>
<dbReference type="HOGENOM" id="CLU_048697_0_0_2"/>
<dbReference type="Proteomes" id="UP000000595">
    <property type="component" value="Chromosome"/>
</dbReference>
<dbReference type="GO" id="GO:0008168">
    <property type="term" value="F:methyltransferase activity"/>
    <property type="evidence" value="ECO:0007669"/>
    <property type="project" value="UniProtKB-KW"/>
</dbReference>
<dbReference type="GO" id="GO:0032259">
    <property type="term" value="P:methylation"/>
    <property type="evidence" value="ECO:0007669"/>
    <property type="project" value="UniProtKB-KW"/>
</dbReference>
<dbReference type="GO" id="GO:0006730">
    <property type="term" value="P:one-carbon metabolic process"/>
    <property type="evidence" value="ECO:0007669"/>
    <property type="project" value="InterPro"/>
</dbReference>
<dbReference type="InterPro" id="IPR011005">
    <property type="entry name" value="Dihydropteroate_synth-like_sf"/>
</dbReference>
<dbReference type="InterPro" id="IPR023467">
    <property type="entry name" value="MeTrfase_MtrH/MtxH"/>
</dbReference>
<dbReference type="InterPro" id="IPR028342">
    <property type="entry name" value="MtrH"/>
</dbReference>
<dbReference type="NCBIfam" id="TIGR01114">
    <property type="entry name" value="mtrH"/>
    <property type="match status" value="1"/>
</dbReference>
<dbReference type="Pfam" id="PF02007">
    <property type="entry name" value="MtrH"/>
    <property type="match status" value="1"/>
</dbReference>
<dbReference type="PIRSF" id="PIRSF500206">
    <property type="entry name" value="MtrH"/>
    <property type="match status" value="1"/>
</dbReference>
<dbReference type="PIRSF" id="PIRSF004960">
    <property type="entry name" value="MtrH_MtxH"/>
    <property type="match status" value="1"/>
</dbReference>
<dbReference type="SUPFAM" id="SSF51717">
    <property type="entry name" value="Dihydropteroate synthetase-like"/>
    <property type="match status" value="1"/>
</dbReference>
<sequence>MFKFQKEQEIANIAGIKVGGQPGELPTVLAGTIFYNRHEIVEDAAKGLFDRDAAEKLVNLQESGSDTTGNPHMVHIFGTTAESITRYIDFIAEVSDSPFLIDSPEGPVRAHAAGYVSEIGLADRAVYNSINMSINTSEMKALEQSDIDSSIILGFNAKDSSLQGRMEMLETGAGLLEEGLLSIADRCGIVNKLIDPSITPMGNGAGIALRMTIAAKAKWGHPTGSGIHNAPSAWNWLNRQKEKDPVLYKICDIGSTCLQQAAAGDFILYGPIEYAEYVFPMAAMSDIMIAEAVADLDIEPVERHPINFLV</sequence>
<evidence type="ECO:0000250" key="1"/>
<evidence type="ECO:0000305" key="2"/>
<feature type="chain" id="PRO_0000147571" description="Putative methyltransferase mtx subunit H">
    <location>
        <begin position="1"/>
        <end position="310"/>
    </location>
</feature>
<protein>
    <recommendedName>
        <fullName>Putative methyltransferase mtx subunit H</fullName>
        <ecNumber>2.1.1.-</ecNumber>
    </recommendedName>
</protein>
<organism>
    <name type="scientific">Methanosarcina mazei (strain ATCC BAA-159 / DSM 3647 / Goe1 / Go1 / JCM 11833 / OCM 88)</name>
    <name type="common">Methanosarcina frisia</name>
    <dbReference type="NCBI Taxonomy" id="192952"/>
    <lineage>
        <taxon>Archaea</taxon>
        <taxon>Methanobacteriati</taxon>
        <taxon>Methanobacteriota</taxon>
        <taxon>Stenosarchaea group</taxon>
        <taxon>Methanomicrobia</taxon>
        <taxon>Methanosarcinales</taxon>
        <taxon>Methanosarcinaceae</taxon>
        <taxon>Methanosarcina</taxon>
    </lineage>
</organism>
<comment type="subunit">
    <text evidence="1">May be part of a complex composed of 3 subunits; MtxA, MtxH and MtxX.</text>
</comment>
<comment type="similarity">
    <text evidence="2">Belongs to the MtrH family.</text>
</comment>
<gene>
    <name type="primary">mtxH</name>
    <name type="ordered locus">MM_0256</name>
</gene>
<accession>Q8Q081</accession>
<proteinExistence type="inferred from homology"/>